<sequence>MSMHDPIADMLTRIRNGQQAKHQQVTLVSSKLKEEIARVLKEEGYIQDFFIETLPNGLKSITLKLKYYHGRPVIEFIKRISRPGLRVYKSYKDLHSIPGFGVAILSTSKGIMTHVSAKVKGVGGEVICEVA</sequence>
<feature type="chain" id="PRO_0000290863" description="Small ribosomal subunit protein uS8">
    <location>
        <begin position="1"/>
        <end position="131"/>
    </location>
</feature>
<keyword id="KW-0687">Ribonucleoprotein</keyword>
<keyword id="KW-0689">Ribosomal protein</keyword>
<keyword id="KW-0694">RNA-binding</keyword>
<keyword id="KW-0699">rRNA-binding</keyword>
<accession>Q5WZJ8</accession>
<comment type="function">
    <text evidence="1">One of the primary rRNA binding proteins, it binds directly to 16S rRNA central domain where it helps coordinate assembly of the platform of the 30S subunit.</text>
</comment>
<comment type="subunit">
    <text evidence="1">Part of the 30S ribosomal subunit. Contacts proteins S5 and S12.</text>
</comment>
<comment type="similarity">
    <text evidence="1">Belongs to the universal ribosomal protein uS8 family.</text>
</comment>
<proteinExistence type="inferred from homology"/>
<dbReference type="EMBL" id="CR628337">
    <property type="protein sequence ID" value="CAH14614.1"/>
    <property type="molecule type" value="Genomic_DNA"/>
</dbReference>
<dbReference type="SMR" id="Q5WZJ8"/>
<dbReference type="KEGG" id="lpf:lpl0383"/>
<dbReference type="LegioList" id="lpl0383"/>
<dbReference type="HOGENOM" id="CLU_098428_0_0_6"/>
<dbReference type="Proteomes" id="UP000002517">
    <property type="component" value="Chromosome"/>
</dbReference>
<dbReference type="GO" id="GO:1990904">
    <property type="term" value="C:ribonucleoprotein complex"/>
    <property type="evidence" value="ECO:0007669"/>
    <property type="project" value="UniProtKB-KW"/>
</dbReference>
<dbReference type="GO" id="GO:0005840">
    <property type="term" value="C:ribosome"/>
    <property type="evidence" value="ECO:0007669"/>
    <property type="project" value="UniProtKB-KW"/>
</dbReference>
<dbReference type="GO" id="GO:0019843">
    <property type="term" value="F:rRNA binding"/>
    <property type="evidence" value="ECO:0007669"/>
    <property type="project" value="UniProtKB-UniRule"/>
</dbReference>
<dbReference type="GO" id="GO:0003735">
    <property type="term" value="F:structural constituent of ribosome"/>
    <property type="evidence" value="ECO:0007669"/>
    <property type="project" value="InterPro"/>
</dbReference>
<dbReference type="GO" id="GO:0006412">
    <property type="term" value="P:translation"/>
    <property type="evidence" value="ECO:0007669"/>
    <property type="project" value="UniProtKB-UniRule"/>
</dbReference>
<dbReference type="FunFam" id="3.30.1370.30:FF:000002">
    <property type="entry name" value="30S ribosomal protein S8"/>
    <property type="match status" value="1"/>
</dbReference>
<dbReference type="FunFam" id="3.30.1490.10:FF:000001">
    <property type="entry name" value="30S ribosomal protein S8"/>
    <property type="match status" value="1"/>
</dbReference>
<dbReference type="Gene3D" id="3.30.1370.30">
    <property type="match status" value="1"/>
</dbReference>
<dbReference type="Gene3D" id="3.30.1490.10">
    <property type="match status" value="1"/>
</dbReference>
<dbReference type="HAMAP" id="MF_01302_B">
    <property type="entry name" value="Ribosomal_uS8_B"/>
    <property type="match status" value="1"/>
</dbReference>
<dbReference type="InterPro" id="IPR000630">
    <property type="entry name" value="Ribosomal_uS8"/>
</dbReference>
<dbReference type="InterPro" id="IPR047863">
    <property type="entry name" value="Ribosomal_uS8_CS"/>
</dbReference>
<dbReference type="InterPro" id="IPR035987">
    <property type="entry name" value="Ribosomal_uS8_sf"/>
</dbReference>
<dbReference type="NCBIfam" id="NF001109">
    <property type="entry name" value="PRK00136.1"/>
    <property type="match status" value="1"/>
</dbReference>
<dbReference type="PANTHER" id="PTHR11758">
    <property type="entry name" value="40S RIBOSOMAL PROTEIN S15A"/>
    <property type="match status" value="1"/>
</dbReference>
<dbReference type="Pfam" id="PF00410">
    <property type="entry name" value="Ribosomal_S8"/>
    <property type="match status" value="1"/>
</dbReference>
<dbReference type="SUPFAM" id="SSF56047">
    <property type="entry name" value="Ribosomal protein S8"/>
    <property type="match status" value="1"/>
</dbReference>
<dbReference type="PROSITE" id="PS00053">
    <property type="entry name" value="RIBOSOMAL_S8"/>
    <property type="match status" value="1"/>
</dbReference>
<protein>
    <recommendedName>
        <fullName evidence="1">Small ribosomal subunit protein uS8</fullName>
    </recommendedName>
    <alternativeName>
        <fullName evidence="2">30S ribosomal protein S8</fullName>
    </alternativeName>
</protein>
<evidence type="ECO:0000255" key="1">
    <source>
        <dbReference type="HAMAP-Rule" id="MF_01302"/>
    </source>
</evidence>
<evidence type="ECO:0000305" key="2"/>
<reference key="1">
    <citation type="journal article" date="2004" name="Nat. Genet.">
        <title>Evidence in the Legionella pneumophila genome for exploitation of host cell functions and high genome plasticity.</title>
        <authorList>
            <person name="Cazalet C."/>
            <person name="Rusniok C."/>
            <person name="Brueggemann H."/>
            <person name="Zidane N."/>
            <person name="Magnier A."/>
            <person name="Ma L."/>
            <person name="Tichit M."/>
            <person name="Jarraud S."/>
            <person name="Bouchier C."/>
            <person name="Vandenesch F."/>
            <person name="Kunst F."/>
            <person name="Etienne J."/>
            <person name="Glaser P."/>
            <person name="Buchrieser C."/>
        </authorList>
    </citation>
    <scope>NUCLEOTIDE SEQUENCE [LARGE SCALE GENOMIC DNA]</scope>
    <source>
        <strain>Lens</strain>
    </source>
</reference>
<name>RS8_LEGPL</name>
<organism>
    <name type="scientific">Legionella pneumophila (strain Lens)</name>
    <dbReference type="NCBI Taxonomy" id="297245"/>
    <lineage>
        <taxon>Bacteria</taxon>
        <taxon>Pseudomonadati</taxon>
        <taxon>Pseudomonadota</taxon>
        <taxon>Gammaproteobacteria</taxon>
        <taxon>Legionellales</taxon>
        <taxon>Legionellaceae</taxon>
        <taxon>Legionella</taxon>
    </lineage>
</organism>
<gene>
    <name evidence="1" type="primary">rpsH</name>
    <name type="ordered locus">lpl0383</name>
</gene>